<dbReference type="EMBL" id="BX548175">
    <property type="protein sequence ID" value="CAE21924.1"/>
    <property type="molecule type" value="Genomic_DNA"/>
</dbReference>
<dbReference type="RefSeq" id="WP_011131116.1">
    <property type="nucleotide sequence ID" value="NC_005071.1"/>
</dbReference>
<dbReference type="SMR" id="Q7V528"/>
<dbReference type="KEGG" id="pmt:PMT_1749"/>
<dbReference type="eggNOG" id="COG0200">
    <property type="taxonomic scope" value="Bacteria"/>
</dbReference>
<dbReference type="HOGENOM" id="CLU_055188_4_2_3"/>
<dbReference type="OrthoDB" id="9810293at2"/>
<dbReference type="Proteomes" id="UP000001423">
    <property type="component" value="Chromosome"/>
</dbReference>
<dbReference type="GO" id="GO:0022625">
    <property type="term" value="C:cytosolic large ribosomal subunit"/>
    <property type="evidence" value="ECO:0007669"/>
    <property type="project" value="TreeGrafter"/>
</dbReference>
<dbReference type="GO" id="GO:0019843">
    <property type="term" value="F:rRNA binding"/>
    <property type="evidence" value="ECO:0007669"/>
    <property type="project" value="UniProtKB-UniRule"/>
</dbReference>
<dbReference type="GO" id="GO:0003735">
    <property type="term" value="F:structural constituent of ribosome"/>
    <property type="evidence" value="ECO:0007669"/>
    <property type="project" value="InterPro"/>
</dbReference>
<dbReference type="GO" id="GO:0006412">
    <property type="term" value="P:translation"/>
    <property type="evidence" value="ECO:0007669"/>
    <property type="project" value="UniProtKB-UniRule"/>
</dbReference>
<dbReference type="Gene3D" id="3.100.10.10">
    <property type="match status" value="1"/>
</dbReference>
<dbReference type="HAMAP" id="MF_01341">
    <property type="entry name" value="Ribosomal_uL15"/>
    <property type="match status" value="1"/>
</dbReference>
<dbReference type="InterPro" id="IPR030878">
    <property type="entry name" value="Ribosomal_uL15"/>
</dbReference>
<dbReference type="InterPro" id="IPR021131">
    <property type="entry name" value="Ribosomal_uL15/eL18"/>
</dbReference>
<dbReference type="InterPro" id="IPR036227">
    <property type="entry name" value="Ribosomal_uL15/eL18_sf"/>
</dbReference>
<dbReference type="InterPro" id="IPR005749">
    <property type="entry name" value="Ribosomal_uL15_bac-type"/>
</dbReference>
<dbReference type="InterPro" id="IPR001196">
    <property type="entry name" value="Ribosomal_uL15_CS"/>
</dbReference>
<dbReference type="NCBIfam" id="TIGR01071">
    <property type="entry name" value="rplO_bact"/>
    <property type="match status" value="1"/>
</dbReference>
<dbReference type="PANTHER" id="PTHR12934">
    <property type="entry name" value="50S RIBOSOMAL PROTEIN L15"/>
    <property type="match status" value="1"/>
</dbReference>
<dbReference type="PANTHER" id="PTHR12934:SF11">
    <property type="entry name" value="LARGE RIBOSOMAL SUBUNIT PROTEIN UL15M"/>
    <property type="match status" value="1"/>
</dbReference>
<dbReference type="Pfam" id="PF00828">
    <property type="entry name" value="Ribosomal_L27A"/>
    <property type="match status" value="1"/>
</dbReference>
<dbReference type="SUPFAM" id="SSF52080">
    <property type="entry name" value="Ribosomal proteins L15p and L18e"/>
    <property type="match status" value="1"/>
</dbReference>
<dbReference type="PROSITE" id="PS00475">
    <property type="entry name" value="RIBOSOMAL_L15"/>
    <property type="match status" value="1"/>
</dbReference>
<comment type="function">
    <text evidence="1">Binds to the 23S rRNA.</text>
</comment>
<comment type="subunit">
    <text evidence="1">Part of the 50S ribosomal subunit.</text>
</comment>
<comment type="similarity">
    <text evidence="1">Belongs to the universal ribosomal protein uL15 family.</text>
</comment>
<accession>Q7V528</accession>
<evidence type="ECO:0000255" key="1">
    <source>
        <dbReference type="HAMAP-Rule" id="MF_01341"/>
    </source>
</evidence>
<evidence type="ECO:0000256" key="2">
    <source>
        <dbReference type="SAM" id="MobiDB-lite"/>
    </source>
</evidence>
<evidence type="ECO:0000305" key="3"/>
<name>RL15_PROMM</name>
<proteinExistence type="inferred from homology"/>
<sequence length="151" mass="16132">MTTLRLDSLKANVGARRRKMRKGRGIAAGQGASCGFGMRGQKSRSGRPTRPGFEGGQMPLYRRVPKLKHFTTVNSKEFTVVNVAALNELKAGSTINLDTLVKNGVVTSPKYPLKVLGNGELKVKLTIQAAAFTATARSKIEAAGGTCEILD</sequence>
<protein>
    <recommendedName>
        <fullName evidence="1">Large ribosomal subunit protein uL15</fullName>
    </recommendedName>
    <alternativeName>
        <fullName evidence="3">50S ribosomal protein L15</fullName>
    </alternativeName>
</protein>
<reference key="1">
    <citation type="journal article" date="2003" name="Nature">
        <title>Genome divergence in two Prochlorococcus ecotypes reflects oceanic niche differentiation.</title>
        <authorList>
            <person name="Rocap G."/>
            <person name="Larimer F.W."/>
            <person name="Lamerdin J.E."/>
            <person name="Malfatti S."/>
            <person name="Chain P."/>
            <person name="Ahlgren N.A."/>
            <person name="Arellano A."/>
            <person name="Coleman M."/>
            <person name="Hauser L."/>
            <person name="Hess W.R."/>
            <person name="Johnson Z.I."/>
            <person name="Land M.L."/>
            <person name="Lindell D."/>
            <person name="Post A.F."/>
            <person name="Regala W."/>
            <person name="Shah M."/>
            <person name="Shaw S.L."/>
            <person name="Steglich C."/>
            <person name="Sullivan M.B."/>
            <person name="Ting C.S."/>
            <person name="Tolonen A."/>
            <person name="Webb E.A."/>
            <person name="Zinser E.R."/>
            <person name="Chisholm S.W."/>
        </authorList>
    </citation>
    <scope>NUCLEOTIDE SEQUENCE [LARGE SCALE GENOMIC DNA]</scope>
    <source>
        <strain>MIT 9313</strain>
    </source>
</reference>
<gene>
    <name evidence="1" type="primary">rplO</name>
    <name type="synonym">rpl15</name>
    <name type="ordered locus">PMT_1749</name>
</gene>
<organism>
    <name type="scientific">Prochlorococcus marinus (strain MIT 9313)</name>
    <dbReference type="NCBI Taxonomy" id="74547"/>
    <lineage>
        <taxon>Bacteria</taxon>
        <taxon>Bacillati</taxon>
        <taxon>Cyanobacteriota</taxon>
        <taxon>Cyanophyceae</taxon>
        <taxon>Synechococcales</taxon>
        <taxon>Prochlorococcaceae</taxon>
        <taxon>Prochlorococcus</taxon>
    </lineage>
</organism>
<keyword id="KW-1185">Reference proteome</keyword>
<keyword id="KW-0687">Ribonucleoprotein</keyword>
<keyword id="KW-0689">Ribosomal protein</keyword>
<keyword id="KW-0694">RNA-binding</keyword>
<keyword id="KW-0699">rRNA-binding</keyword>
<feature type="chain" id="PRO_0000104780" description="Large ribosomal subunit protein uL15">
    <location>
        <begin position="1"/>
        <end position="151"/>
    </location>
</feature>
<feature type="region of interest" description="Disordered" evidence="2">
    <location>
        <begin position="37"/>
        <end position="57"/>
    </location>
</feature>